<evidence type="ECO:0000255" key="1">
    <source>
        <dbReference type="HAMAP-Rule" id="MF_00152"/>
    </source>
</evidence>
<protein>
    <recommendedName>
        <fullName evidence="1">Probable endonuclease 4</fullName>
        <ecNumber evidence="1">3.1.21.2</ecNumber>
    </recommendedName>
    <alternativeName>
        <fullName evidence="1">Endodeoxyribonuclease IV</fullName>
    </alternativeName>
    <alternativeName>
        <fullName evidence="1">Endonuclease IV</fullName>
    </alternativeName>
</protein>
<keyword id="KW-0227">DNA damage</keyword>
<keyword id="KW-0234">DNA repair</keyword>
<keyword id="KW-0255">Endonuclease</keyword>
<keyword id="KW-0378">Hydrolase</keyword>
<keyword id="KW-0479">Metal-binding</keyword>
<keyword id="KW-0540">Nuclease</keyword>
<keyword id="KW-0862">Zinc</keyword>
<comment type="function">
    <text evidence="1">Endonuclease IV plays a role in DNA repair. It cleaves phosphodiester bonds at apurinic or apyrimidinic (AP) sites, generating a 3'-hydroxyl group and a 5'-terminal sugar phosphate.</text>
</comment>
<comment type="catalytic activity">
    <reaction evidence="1">
        <text>Endonucleolytic cleavage to 5'-phosphooligonucleotide end-products.</text>
        <dbReference type="EC" id="3.1.21.2"/>
    </reaction>
</comment>
<comment type="cofactor">
    <cofactor evidence="1">
        <name>Zn(2+)</name>
        <dbReference type="ChEBI" id="CHEBI:29105"/>
    </cofactor>
    <text evidence="1">Binds 3 Zn(2+) ions.</text>
</comment>
<comment type="similarity">
    <text evidence="1">Belongs to the AP endonuclease 2 family.</text>
</comment>
<feature type="chain" id="PRO_1000011302" description="Probable endonuclease 4">
    <location>
        <begin position="1"/>
        <end position="282"/>
    </location>
</feature>
<feature type="binding site" evidence="1">
    <location>
        <position position="66"/>
    </location>
    <ligand>
        <name>Zn(2+)</name>
        <dbReference type="ChEBI" id="CHEBI:29105"/>
        <label>1</label>
    </ligand>
</feature>
<feature type="binding site" evidence="1">
    <location>
        <position position="106"/>
    </location>
    <ligand>
        <name>Zn(2+)</name>
        <dbReference type="ChEBI" id="CHEBI:29105"/>
        <label>1</label>
    </ligand>
</feature>
<feature type="binding site" evidence="1">
    <location>
        <position position="143"/>
    </location>
    <ligand>
        <name>Zn(2+)</name>
        <dbReference type="ChEBI" id="CHEBI:29105"/>
        <label>1</label>
    </ligand>
</feature>
<feature type="binding site" evidence="1">
    <location>
        <position position="143"/>
    </location>
    <ligand>
        <name>Zn(2+)</name>
        <dbReference type="ChEBI" id="CHEBI:29105"/>
        <label>2</label>
    </ligand>
</feature>
<feature type="binding site" evidence="1">
    <location>
        <position position="177"/>
    </location>
    <ligand>
        <name>Zn(2+)</name>
        <dbReference type="ChEBI" id="CHEBI:29105"/>
        <label>2</label>
    </ligand>
</feature>
<feature type="binding site" evidence="1">
    <location>
        <position position="180"/>
    </location>
    <ligand>
        <name>Zn(2+)</name>
        <dbReference type="ChEBI" id="CHEBI:29105"/>
        <label>3</label>
    </ligand>
</feature>
<feature type="binding site" evidence="1">
    <location>
        <position position="214"/>
    </location>
    <ligand>
        <name>Zn(2+)</name>
        <dbReference type="ChEBI" id="CHEBI:29105"/>
        <label>2</label>
    </ligand>
</feature>
<feature type="binding site" evidence="1">
    <location>
        <position position="227"/>
    </location>
    <ligand>
        <name>Zn(2+)</name>
        <dbReference type="ChEBI" id="CHEBI:29105"/>
        <label>3</label>
    </ligand>
</feature>
<feature type="binding site" evidence="1">
    <location>
        <position position="229"/>
    </location>
    <ligand>
        <name>Zn(2+)</name>
        <dbReference type="ChEBI" id="CHEBI:29105"/>
        <label>3</label>
    </ligand>
</feature>
<feature type="binding site" evidence="1">
    <location>
        <position position="259"/>
    </location>
    <ligand>
        <name>Zn(2+)</name>
        <dbReference type="ChEBI" id="CHEBI:29105"/>
        <label>2</label>
    </ligand>
</feature>
<dbReference type="EC" id="3.1.21.2" evidence="1"/>
<dbReference type="EMBL" id="CP000527">
    <property type="protein sequence ID" value="ABM28851.1"/>
    <property type="molecule type" value="Genomic_DNA"/>
</dbReference>
<dbReference type="RefSeq" id="WP_011792497.1">
    <property type="nucleotide sequence ID" value="NC_008751.1"/>
</dbReference>
<dbReference type="SMR" id="A1VEI5"/>
<dbReference type="KEGG" id="dvl:Dvul_1834"/>
<dbReference type="HOGENOM" id="CLU_025885_0_1_7"/>
<dbReference type="Proteomes" id="UP000009173">
    <property type="component" value="Chromosome"/>
</dbReference>
<dbReference type="GO" id="GO:0008833">
    <property type="term" value="F:deoxyribonuclease IV (phage-T4-induced) activity"/>
    <property type="evidence" value="ECO:0007669"/>
    <property type="project" value="UniProtKB-UniRule"/>
</dbReference>
<dbReference type="GO" id="GO:0003677">
    <property type="term" value="F:DNA binding"/>
    <property type="evidence" value="ECO:0007669"/>
    <property type="project" value="InterPro"/>
</dbReference>
<dbReference type="GO" id="GO:0003906">
    <property type="term" value="F:DNA-(apurinic or apyrimidinic site) endonuclease activity"/>
    <property type="evidence" value="ECO:0007669"/>
    <property type="project" value="TreeGrafter"/>
</dbReference>
<dbReference type="GO" id="GO:0008081">
    <property type="term" value="F:phosphoric diester hydrolase activity"/>
    <property type="evidence" value="ECO:0007669"/>
    <property type="project" value="TreeGrafter"/>
</dbReference>
<dbReference type="GO" id="GO:0008270">
    <property type="term" value="F:zinc ion binding"/>
    <property type="evidence" value="ECO:0007669"/>
    <property type="project" value="UniProtKB-UniRule"/>
</dbReference>
<dbReference type="GO" id="GO:0006284">
    <property type="term" value="P:base-excision repair"/>
    <property type="evidence" value="ECO:0007669"/>
    <property type="project" value="TreeGrafter"/>
</dbReference>
<dbReference type="CDD" id="cd00019">
    <property type="entry name" value="AP2Ec"/>
    <property type="match status" value="1"/>
</dbReference>
<dbReference type="FunFam" id="3.20.20.150:FF:000001">
    <property type="entry name" value="Probable endonuclease 4"/>
    <property type="match status" value="1"/>
</dbReference>
<dbReference type="Gene3D" id="3.20.20.150">
    <property type="entry name" value="Divalent-metal-dependent TIM barrel enzymes"/>
    <property type="match status" value="1"/>
</dbReference>
<dbReference type="HAMAP" id="MF_00152">
    <property type="entry name" value="Nfo"/>
    <property type="match status" value="1"/>
</dbReference>
<dbReference type="InterPro" id="IPR001719">
    <property type="entry name" value="AP_endonuc_2"/>
</dbReference>
<dbReference type="InterPro" id="IPR018246">
    <property type="entry name" value="AP_endonuc_F2_Zn_BS"/>
</dbReference>
<dbReference type="InterPro" id="IPR036237">
    <property type="entry name" value="Xyl_isomerase-like_sf"/>
</dbReference>
<dbReference type="InterPro" id="IPR013022">
    <property type="entry name" value="Xyl_isomerase-like_TIM-brl"/>
</dbReference>
<dbReference type="NCBIfam" id="TIGR00587">
    <property type="entry name" value="nfo"/>
    <property type="match status" value="1"/>
</dbReference>
<dbReference type="PANTHER" id="PTHR21445:SF0">
    <property type="entry name" value="APURINIC-APYRIMIDINIC ENDONUCLEASE"/>
    <property type="match status" value="1"/>
</dbReference>
<dbReference type="PANTHER" id="PTHR21445">
    <property type="entry name" value="ENDONUCLEASE IV ENDODEOXYRIBONUCLEASE IV"/>
    <property type="match status" value="1"/>
</dbReference>
<dbReference type="Pfam" id="PF01261">
    <property type="entry name" value="AP_endonuc_2"/>
    <property type="match status" value="1"/>
</dbReference>
<dbReference type="SMART" id="SM00518">
    <property type="entry name" value="AP2Ec"/>
    <property type="match status" value="1"/>
</dbReference>
<dbReference type="SUPFAM" id="SSF51658">
    <property type="entry name" value="Xylose isomerase-like"/>
    <property type="match status" value="1"/>
</dbReference>
<dbReference type="PROSITE" id="PS00729">
    <property type="entry name" value="AP_NUCLEASE_F2_1"/>
    <property type="match status" value="1"/>
</dbReference>
<dbReference type="PROSITE" id="PS00731">
    <property type="entry name" value="AP_NUCLEASE_F2_3"/>
    <property type="match status" value="1"/>
</dbReference>
<dbReference type="PROSITE" id="PS51432">
    <property type="entry name" value="AP_NUCLEASE_F2_4"/>
    <property type="match status" value="1"/>
</dbReference>
<gene>
    <name evidence="1" type="primary">nfo</name>
    <name type="ordered locus">Dvul_1834</name>
</gene>
<name>END4_NITV4</name>
<reference key="1">
    <citation type="journal article" date="2009" name="Environ. Microbiol.">
        <title>Contribution of mobile genetic elements to Desulfovibrio vulgaris genome plasticity.</title>
        <authorList>
            <person name="Walker C.B."/>
            <person name="Stolyar S."/>
            <person name="Chivian D."/>
            <person name="Pinel N."/>
            <person name="Gabster J.A."/>
            <person name="Dehal P.S."/>
            <person name="He Z."/>
            <person name="Yang Z.K."/>
            <person name="Yen H.C."/>
            <person name="Zhou J."/>
            <person name="Wall J.D."/>
            <person name="Hazen T.C."/>
            <person name="Arkin A.P."/>
            <person name="Stahl D.A."/>
        </authorList>
    </citation>
    <scope>NUCLEOTIDE SEQUENCE [LARGE SCALE GENOMIC DNA]</scope>
    <source>
        <strain>DP4</strain>
    </source>
</reference>
<sequence>MPLFGAHMSAAGGVSNAIRDIVEIGGEVLQLFTANQRQWTPKAPSAADVEAFRRRRAAFGGPVFSHASYLINIANGDGAASAKAVEALVREFERCTALGVDAVVLHPGAHLGAGRGAGILRAARNIDEVFDRCGGQTPALLLENTAGQGTCLGGGLNDLAEIIDASRHASQLGVCLDTAHAFGAGYALHTDEGYRRCMEDIEYGPGLAAVRLFHVNDSLVPCGSRKDRHTHIGEGQLGEAAFVRLLNDPVFAMHPMVLETPKEDGHAADRRNLATLRRLAGR</sequence>
<accession>A1VEI5</accession>
<organism>
    <name type="scientific">Nitratidesulfovibrio vulgaris (strain DP4)</name>
    <name type="common">Desulfovibrio vulgaris</name>
    <dbReference type="NCBI Taxonomy" id="391774"/>
    <lineage>
        <taxon>Bacteria</taxon>
        <taxon>Pseudomonadati</taxon>
        <taxon>Thermodesulfobacteriota</taxon>
        <taxon>Desulfovibrionia</taxon>
        <taxon>Desulfovibrionales</taxon>
        <taxon>Desulfovibrionaceae</taxon>
        <taxon>Nitratidesulfovibrio</taxon>
    </lineage>
</organism>
<proteinExistence type="inferred from homology"/>